<keyword id="KW-0007">Acetylation</keyword>
<keyword id="KW-0030">Aminoacyl-tRNA synthetase</keyword>
<keyword id="KW-0067">ATP-binding</keyword>
<keyword id="KW-0963">Cytoplasm</keyword>
<keyword id="KW-0238">DNA-binding</keyword>
<keyword id="KW-0436">Ligase</keyword>
<keyword id="KW-0547">Nucleotide-binding</keyword>
<keyword id="KW-0539">Nucleus</keyword>
<keyword id="KW-0597">Phosphoprotein</keyword>
<keyword id="KW-0648">Protein biosynthesis</keyword>
<keyword id="KW-1185">Reference proteome</keyword>
<protein>
    <recommendedName>
        <fullName>Serine--tRNA ligase, cytoplasmic</fullName>
        <ecNumber evidence="1">6.1.1.11</ecNumber>
    </recommendedName>
    <alternativeName>
        <fullName>Seryl-tRNA synthetase</fullName>
        <shortName>SerRS</shortName>
    </alternativeName>
    <alternativeName>
        <fullName>Seryl-tRNA(Ser/Sec) synthetase</fullName>
    </alternativeName>
</protein>
<name>SYSC_CRIGR</name>
<accession>P26636</accession>
<accession>G3ILI3</accession>
<comment type="function">
    <text evidence="1">Catalyzes the attachment of serine to tRNA(Ser) in a two-step reaction: serine is first activated by ATP to form Ser-AMP and then transferred to the acceptor end of tRNA(Ser). Is probably also able to aminoacylate tRNA(Sec) with serine, to form the misacylated tRNA L-seryl-tRNA(Sec), which will be further converted into selenocysteinyl-tRNA(Sec). In the nucleus, binds to the VEGFA core promoter and prevents MYC binding and transcriptional activation by MYC. Recruits SIRT2 to the VEGFA promoter, promoting deacetylation of histone H4 at 'Lys-16' (H4K16). Thereby, inhibits the production of VEGFA and sprouting angiogenesis mediated by VEGFA.</text>
</comment>
<comment type="catalytic activity">
    <reaction evidence="1">
        <text>tRNA(Ser) + L-serine + ATP = L-seryl-tRNA(Ser) + AMP + diphosphate + H(+)</text>
        <dbReference type="Rhea" id="RHEA:12292"/>
        <dbReference type="Rhea" id="RHEA-COMP:9669"/>
        <dbReference type="Rhea" id="RHEA-COMP:9703"/>
        <dbReference type="ChEBI" id="CHEBI:15378"/>
        <dbReference type="ChEBI" id="CHEBI:30616"/>
        <dbReference type="ChEBI" id="CHEBI:33019"/>
        <dbReference type="ChEBI" id="CHEBI:33384"/>
        <dbReference type="ChEBI" id="CHEBI:78442"/>
        <dbReference type="ChEBI" id="CHEBI:78533"/>
        <dbReference type="ChEBI" id="CHEBI:456215"/>
        <dbReference type="EC" id="6.1.1.11"/>
    </reaction>
</comment>
<comment type="catalytic activity">
    <reaction evidence="1">
        <text>tRNA(Sec) + L-serine + ATP = L-seryl-tRNA(Sec) + AMP + diphosphate + H(+)</text>
        <dbReference type="Rhea" id="RHEA:42580"/>
        <dbReference type="Rhea" id="RHEA-COMP:9742"/>
        <dbReference type="Rhea" id="RHEA-COMP:10128"/>
        <dbReference type="ChEBI" id="CHEBI:15378"/>
        <dbReference type="ChEBI" id="CHEBI:30616"/>
        <dbReference type="ChEBI" id="CHEBI:33019"/>
        <dbReference type="ChEBI" id="CHEBI:33384"/>
        <dbReference type="ChEBI" id="CHEBI:78442"/>
        <dbReference type="ChEBI" id="CHEBI:78533"/>
        <dbReference type="ChEBI" id="CHEBI:456215"/>
        <dbReference type="EC" id="6.1.1.11"/>
    </reaction>
</comment>
<comment type="pathway">
    <text>Aminoacyl-tRNA biosynthesis; selenocysteinyl-tRNA(Sec) biosynthesis; L-seryl-tRNA(Sec) from L-serine and tRNA(Sec): step 1/1.</text>
</comment>
<comment type="subunit">
    <text evidence="1">Homodimer. The tRNA molecule may bind across the dimer. Interacts with SIRT2. Interacts with METTL6; interaction is required for the tRNA N(3)-methylcytidine methyltransferase activity of METTL6.</text>
</comment>
<comment type="subcellular location">
    <subcellularLocation>
        <location evidence="1">Cytoplasm</location>
    </subcellularLocation>
    <subcellularLocation>
        <location evidence="1">Nucleus</location>
    </subcellularLocation>
    <text evidence="1">Predominantly cytoplasmic, but a minor proportion is also found in the nucleus.</text>
</comment>
<comment type="domain">
    <text evidence="1">Consists of two distinct domains, a catalytic core and a N-terminal extension that is involved in tRNA binding.</text>
</comment>
<comment type="similarity">
    <text evidence="3">Belongs to the class-II aminoacyl-tRNA synthetase family. Type-1 seryl-tRNA synthetase subfamily.</text>
</comment>
<organism>
    <name type="scientific">Cricetulus griseus</name>
    <name type="common">Chinese hamster</name>
    <name type="synonym">Cricetulus barabensis griseus</name>
    <dbReference type="NCBI Taxonomy" id="10029"/>
    <lineage>
        <taxon>Eukaryota</taxon>
        <taxon>Metazoa</taxon>
        <taxon>Chordata</taxon>
        <taxon>Craniata</taxon>
        <taxon>Vertebrata</taxon>
        <taxon>Euteleostomi</taxon>
        <taxon>Mammalia</taxon>
        <taxon>Eutheria</taxon>
        <taxon>Euarchontoglires</taxon>
        <taxon>Glires</taxon>
        <taxon>Rodentia</taxon>
        <taxon>Myomorpha</taxon>
        <taxon>Muroidea</taxon>
        <taxon>Cricetidae</taxon>
        <taxon>Cricetinae</taxon>
        <taxon>Cricetulus</taxon>
    </lineage>
</organism>
<reference evidence="4" key="1">
    <citation type="journal article" date="2011" name="Nat. Biotechnol.">
        <title>The genomic sequence of the Chinese hamster ovary (CHO)-K1 cell line.</title>
        <authorList>
            <person name="Xu X."/>
            <person name="Nagarajan H."/>
            <person name="Lewis N.E."/>
            <person name="Pan S."/>
            <person name="Cai Z."/>
            <person name="Liu X."/>
            <person name="Chen W."/>
            <person name="Xie M."/>
            <person name="Wang W."/>
            <person name="Hammond S."/>
            <person name="Andersen M.R."/>
            <person name="Neff N."/>
            <person name="Passarelli B."/>
            <person name="Koh W."/>
            <person name="Fan H.C."/>
            <person name="Wang J."/>
            <person name="Gui Y."/>
            <person name="Lee K.H."/>
            <person name="Betenbaugh M.J."/>
            <person name="Quake S.R."/>
            <person name="Famili I."/>
            <person name="Palsson B.O."/>
            <person name="Wang J."/>
        </authorList>
    </citation>
    <scope>NUCLEOTIDE SEQUENCE [LARGE SCALE GENOMIC DNA]</scope>
    <source>
        <strain evidence="4">CHO K1 cell line</strain>
    </source>
</reference>
<reference evidence="5" key="2">
    <citation type="journal article" date="2013" name="Nat. Biotechnol.">
        <title>Chinese hamster genome sequenced from sorted chromosomes.</title>
        <authorList>
            <person name="Brinkrolf K."/>
            <person name="Rupp O."/>
            <person name="Laux H."/>
            <person name="Kollin F."/>
            <person name="Ernst W."/>
            <person name="Linke B."/>
            <person name="Kofler R."/>
            <person name="Romand S."/>
            <person name="Hesse F."/>
            <person name="Budach W.E."/>
            <person name="Galosy S."/>
            <person name="Muller D."/>
            <person name="Noll T."/>
            <person name="Wienberg J."/>
            <person name="Jostock T."/>
            <person name="Leonard M."/>
            <person name="Grillari J."/>
            <person name="Tauch A."/>
            <person name="Goesmann A."/>
            <person name="Helk B."/>
            <person name="Mott J.E."/>
            <person name="Puhler A."/>
            <person name="Borth N."/>
        </authorList>
    </citation>
    <scope>NUCLEOTIDE SEQUENCE [LARGE SCALE GENOMIC DNA]</scope>
    <source>
        <strain evidence="5">17A/GY</strain>
    </source>
</reference>
<reference key="3">
    <citation type="journal article" date="1992" name="Nucleic Acids Res.">
        <title>A seryl-tRNA synthetase gene is coamplified with the adenylate deaminase 2 gene in coformycin resistant Chinese hamster fibroblasts.</title>
        <authorList>
            <person name="Lunel C."/>
            <person name="Buttin G."/>
            <person name="de Saint Vincent B.R."/>
        </authorList>
    </citation>
    <scope>NUCLEOTIDE SEQUENCE [MRNA] OF 307-512</scope>
</reference>
<gene>
    <name type="primary">SARS1</name>
    <name type="synonym">SARS</name>
</gene>
<evidence type="ECO:0000250" key="1">
    <source>
        <dbReference type="UniProtKB" id="P49591"/>
    </source>
</evidence>
<evidence type="ECO:0000256" key="2">
    <source>
        <dbReference type="SAM" id="MobiDB-lite"/>
    </source>
</evidence>
<evidence type="ECO:0000305" key="3"/>
<evidence type="ECO:0000312" key="4">
    <source>
        <dbReference type="Proteomes" id="UP000001075"/>
    </source>
</evidence>
<evidence type="ECO:0000312" key="5">
    <source>
        <dbReference type="Proteomes" id="UP000030759"/>
    </source>
</evidence>
<feature type="chain" id="PRO_0000122190" description="Serine--tRNA ligase, cytoplasmic">
    <location>
        <begin position="1"/>
        <end position="512"/>
    </location>
</feature>
<feature type="region of interest" description="Interaction with tRNA" evidence="1">
    <location>
        <begin position="9"/>
        <end position="61"/>
    </location>
</feature>
<feature type="region of interest" description="Disordered" evidence="2">
    <location>
        <begin position="472"/>
        <end position="512"/>
    </location>
</feature>
<feature type="short sequence motif" description="Nuclear localization signal" evidence="1">
    <location>
        <begin position="482"/>
        <end position="494"/>
    </location>
</feature>
<feature type="compositionally biased region" description="Basic and acidic residues" evidence="2">
    <location>
        <begin position="479"/>
        <end position="499"/>
    </location>
</feature>
<feature type="compositionally biased region" description="Polar residues" evidence="2">
    <location>
        <begin position="500"/>
        <end position="512"/>
    </location>
</feature>
<feature type="binding site" evidence="1">
    <location>
        <position position="271"/>
    </location>
    <ligand>
        <name>L-serine</name>
        <dbReference type="ChEBI" id="CHEBI:33384"/>
    </ligand>
</feature>
<feature type="binding site" evidence="1">
    <location>
        <begin position="302"/>
        <end position="304"/>
    </location>
    <ligand>
        <name>ATP</name>
        <dbReference type="ChEBI" id="CHEBI:30616"/>
    </ligand>
</feature>
<feature type="binding site" evidence="1">
    <location>
        <position position="302"/>
    </location>
    <ligand>
        <name>L-serine</name>
        <dbReference type="ChEBI" id="CHEBI:33384"/>
    </ligand>
</feature>
<feature type="binding site" evidence="1">
    <location>
        <begin position="318"/>
        <end position="321"/>
    </location>
    <ligand>
        <name>ATP</name>
        <dbReference type="ChEBI" id="CHEBI:30616"/>
    </ligand>
</feature>
<feature type="binding site" evidence="1">
    <location>
        <position position="325"/>
    </location>
    <ligand>
        <name>L-serine</name>
        <dbReference type="ChEBI" id="CHEBI:33384"/>
    </ligand>
</feature>
<feature type="binding site" evidence="1">
    <location>
        <begin position="391"/>
        <end position="394"/>
    </location>
    <ligand>
        <name>ATP</name>
        <dbReference type="ChEBI" id="CHEBI:30616"/>
    </ligand>
</feature>
<feature type="binding site" evidence="1">
    <location>
        <position position="427"/>
    </location>
    <ligand>
        <name>L-serine</name>
        <dbReference type="ChEBI" id="CHEBI:33384"/>
    </ligand>
</feature>
<feature type="binding site" evidence="1">
    <location>
        <position position="429"/>
    </location>
    <ligand>
        <name>L-serine</name>
        <dbReference type="ChEBI" id="CHEBI:33384"/>
    </ligand>
</feature>
<feature type="site" description="Important for serine binding" evidence="1">
    <location>
        <position position="429"/>
    </location>
</feature>
<feature type="modified residue" description="N-acetylmethionine" evidence="1">
    <location>
        <position position="1"/>
    </location>
</feature>
<feature type="modified residue" description="Phosphoserine" evidence="1">
    <location>
        <position position="241"/>
    </location>
</feature>
<feature type="modified residue" description="N6-acetyllysine" evidence="1">
    <location>
        <position position="323"/>
    </location>
</feature>
<feature type="sequence conflict" description="In Ref. 3; AAA37019." ref="3">
    <original>S</original>
    <variation>L</variation>
    <location>
        <position position="307"/>
    </location>
</feature>
<feature type="sequence conflict" description="In Ref. 3; AAA37019." ref="3">
    <original>S</original>
    <variation>T</variation>
    <location>
        <position position="330"/>
    </location>
</feature>
<feature type="sequence conflict" description="In Ref. 3; AAA37019." ref="3">
    <original>KAKEVTLESQLQNMEVTE</original>
    <variation>ESKRGHPGEPA</variation>
    <location>
        <begin position="494"/>
        <end position="511"/>
    </location>
</feature>
<proteinExistence type="evidence at transcript level"/>
<dbReference type="EC" id="6.1.1.11" evidence="1"/>
<dbReference type="EMBL" id="JH004075">
    <property type="protein sequence ID" value="EGW15135.1"/>
    <property type="molecule type" value="Genomic_DNA"/>
</dbReference>
<dbReference type="EMBL" id="KE664402">
    <property type="protein sequence ID" value="ERE89987.1"/>
    <property type="molecule type" value="Genomic_DNA"/>
</dbReference>
<dbReference type="EMBL" id="M88136">
    <property type="protein sequence ID" value="AAA37019.1"/>
    <property type="molecule type" value="mRNA"/>
</dbReference>
<dbReference type="PIR" id="S35441">
    <property type="entry name" value="S35441"/>
</dbReference>
<dbReference type="RefSeq" id="XP_003515309.1">
    <property type="nucleotide sequence ID" value="XM_003515261.3"/>
</dbReference>
<dbReference type="RefSeq" id="XP_007624630.1">
    <property type="nucleotide sequence ID" value="XM_007626440.2"/>
</dbReference>
<dbReference type="SMR" id="P26636"/>
<dbReference type="FunCoup" id="P26636">
    <property type="interactions" value="2454"/>
</dbReference>
<dbReference type="STRING" id="10029.P26636"/>
<dbReference type="PaxDb" id="10029-XP_007624630.1"/>
<dbReference type="Ensembl" id="ENSCGRT00001014655.1">
    <property type="protein sequence ID" value="ENSCGRP00001010434.1"/>
    <property type="gene ID" value="ENSCGRG00001012323.1"/>
</dbReference>
<dbReference type="GeneID" id="100689195"/>
<dbReference type="CTD" id="6301"/>
<dbReference type="eggNOG" id="KOG2509">
    <property type="taxonomic scope" value="Eukaryota"/>
</dbReference>
<dbReference type="GeneTree" id="ENSGT00940000153792"/>
<dbReference type="InParanoid" id="P26636"/>
<dbReference type="OrthoDB" id="10264585at2759"/>
<dbReference type="UniPathway" id="UPA00906">
    <property type="reaction ID" value="UER00895"/>
</dbReference>
<dbReference type="Proteomes" id="UP000001075">
    <property type="component" value="Unassembled WGS sequence"/>
</dbReference>
<dbReference type="Proteomes" id="UP000030759">
    <property type="component" value="Unassembled WGS sequence"/>
</dbReference>
<dbReference type="Proteomes" id="UP000694386">
    <property type="component" value="Unplaced"/>
</dbReference>
<dbReference type="Proteomes" id="UP001108280">
    <property type="component" value="Unplaced"/>
</dbReference>
<dbReference type="GO" id="GO:0005737">
    <property type="term" value="C:cytoplasm"/>
    <property type="evidence" value="ECO:0000250"/>
    <property type="project" value="UniProtKB"/>
</dbReference>
<dbReference type="GO" id="GO:0005829">
    <property type="term" value="C:cytosol"/>
    <property type="evidence" value="ECO:0000250"/>
    <property type="project" value="UniProtKB"/>
</dbReference>
<dbReference type="GO" id="GO:0005634">
    <property type="term" value="C:nucleus"/>
    <property type="evidence" value="ECO:0000250"/>
    <property type="project" value="UniProtKB"/>
</dbReference>
<dbReference type="GO" id="GO:0005524">
    <property type="term" value="F:ATP binding"/>
    <property type="evidence" value="ECO:0007669"/>
    <property type="project" value="UniProtKB-KW"/>
</dbReference>
<dbReference type="GO" id="GO:0000978">
    <property type="term" value="F:RNA polymerase II cis-regulatory region sequence-specific DNA binding"/>
    <property type="evidence" value="ECO:0000250"/>
    <property type="project" value="UniProtKB"/>
</dbReference>
<dbReference type="GO" id="GO:0098619">
    <property type="term" value="F:selenocysteine-tRNA ligase activity"/>
    <property type="evidence" value="ECO:0000250"/>
    <property type="project" value="UniProtKB"/>
</dbReference>
<dbReference type="GO" id="GO:0004828">
    <property type="term" value="F:serine-tRNA ligase activity"/>
    <property type="evidence" value="ECO:0000250"/>
    <property type="project" value="UniProtKB"/>
</dbReference>
<dbReference type="GO" id="GO:0002181">
    <property type="term" value="P:cytoplasmic translation"/>
    <property type="evidence" value="ECO:0000250"/>
    <property type="project" value="UniProtKB"/>
</dbReference>
<dbReference type="GO" id="GO:0016525">
    <property type="term" value="P:negative regulation of angiogenesis"/>
    <property type="evidence" value="ECO:0000250"/>
    <property type="project" value="UniProtKB"/>
</dbReference>
<dbReference type="GO" id="GO:0000122">
    <property type="term" value="P:negative regulation of transcription by RNA polymerase II"/>
    <property type="evidence" value="ECO:0000250"/>
    <property type="project" value="UniProtKB"/>
</dbReference>
<dbReference type="GO" id="GO:1904046">
    <property type="term" value="P:negative regulation of vascular endothelial growth factor production"/>
    <property type="evidence" value="ECO:0000250"/>
    <property type="project" value="UniProtKB"/>
</dbReference>
<dbReference type="GO" id="GO:0001514">
    <property type="term" value="P:selenocysteine incorporation"/>
    <property type="evidence" value="ECO:0000250"/>
    <property type="project" value="UniProtKB"/>
</dbReference>
<dbReference type="GO" id="GO:0006434">
    <property type="term" value="P:seryl-tRNA aminoacylation"/>
    <property type="evidence" value="ECO:0000250"/>
    <property type="project" value="UniProtKB"/>
</dbReference>
<dbReference type="CDD" id="cd00770">
    <property type="entry name" value="SerRS_core"/>
    <property type="match status" value="1"/>
</dbReference>
<dbReference type="FunFam" id="1.10.287.40:FF:000002">
    <property type="entry name" value="Serine--tRNA ligase, cytoplasmic"/>
    <property type="match status" value="1"/>
</dbReference>
<dbReference type="FunFam" id="3.30.930.10:FF:000027">
    <property type="entry name" value="Serine--tRNA ligase, cytoplasmic"/>
    <property type="match status" value="1"/>
</dbReference>
<dbReference type="Gene3D" id="3.30.930.10">
    <property type="entry name" value="Bira Bifunctional Protein, Domain 2"/>
    <property type="match status" value="1"/>
</dbReference>
<dbReference type="Gene3D" id="1.10.287.40">
    <property type="entry name" value="Serine-tRNA synthetase, tRNA binding domain"/>
    <property type="match status" value="1"/>
</dbReference>
<dbReference type="InterPro" id="IPR002314">
    <property type="entry name" value="aa-tRNA-synt_IIb"/>
</dbReference>
<dbReference type="InterPro" id="IPR006195">
    <property type="entry name" value="aa-tRNA-synth_II"/>
</dbReference>
<dbReference type="InterPro" id="IPR045864">
    <property type="entry name" value="aa-tRNA-synth_II/BPL/LPL"/>
</dbReference>
<dbReference type="InterPro" id="IPR002317">
    <property type="entry name" value="Ser-tRNA-ligase_type_1"/>
</dbReference>
<dbReference type="InterPro" id="IPR015866">
    <property type="entry name" value="Ser-tRNA-synth_1_N"/>
</dbReference>
<dbReference type="InterPro" id="IPR042103">
    <property type="entry name" value="SerRS_1_N_sf"/>
</dbReference>
<dbReference type="InterPro" id="IPR033729">
    <property type="entry name" value="SerRS_core"/>
</dbReference>
<dbReference type="InterPro" id="IPR010978">
    <property type="entry name" value="tRNA-bd_arm"/>
</dbReference>
<dbReference type="NCBIfam" id="TIGR00414">
    <property type="entry name" value="serS"/>
    <property type="match status" value="1"/>
</dbReference>
<dbReference type="PANTHER" id="PTHR11778">
    <property type="entry name" value="SERYL-TRNA SYNTHETASE"/>
    <property type="match status" value="1"/>
</dbReference>
<dbReference type="Pfam" id="PF02403">
    <property type="entry name" value="Seryl_tRNA_N"/>
    <property type="match status" value="1"/>
</dbReference>
<dbReference type="Pfam" id="PF00587">
    <property type="entry name" value="tRNA-synt_2b"/>
    <property type="match status" value="1"/>
</dbReference>
<dbReference type="PIRSF" id="PIRSF001529">
    <property type="entry name" value="Ser-tRNA-synth_IIa"/>
    <property type="match status" value="1"/>
</dbReference>
<dbReference type="PRINTS" id="PR00981">
    <property type="entry name" value="TRNASYNTHSER"/>
</dbReference>
<dbReference type="SUPFAM" id="SSF55681">
    <property type="entry name" value="Class II aaRS and biotin synthetases"/>
    <property type="match status" value="1"/>
</dbReference>
<dbReference type="SUPFAM" id="SSF46589">
    <property type="entry name" value="tRNA-binding arm"/>
    <property type="match status" value="1"/>
</dbReference>
<dbReference type="PROSITE" id="PS50862">
    <property type="entry name" value="AA_TRNA_LIGASE_II"/>
    <property type="match status" value="1"/>
</dbReference>
<sequence length="512" mass="58601">MVLDLDLFRVDKGGDPALIRETQEKRFKDPGLVDQLVKADSEWRRCRFRADNLNKLKNLCSKTIGEKMKKKEPVGDDEFIPEDVLNFDDLTADTLSALKVSQIKKVRLLIDEAIQKCDGERLKLEAERFENLREIGNLLHPSVPISNDEDADNKVERIWGDCTVRKKYSHVDLVVMVDGFEGEKGAVVAGSRGYFLKGVLVFLEQALIQYALRTLGSRGYTPIYTPFFMRKEVMQEVAQLSQFDEELYKVIGKGSEKSDDSSYDEKYLIATSEQPIAALHRDEWLRPEDLPIKYAGLSTCFRQEVGSHGRDTRGIFRVHQFEKIEQFVYSSPHDNKSWEMFEEMIGTAEEFYQSLGIPYHIVNIVSGSLNHAASKKLDLEAWFPGSGAFRELVSCSNCTDYQARRLRIRYGQTKKMMDKVEFVHMLNATMCATTRTICAILENYQTEKGIIVPEKLREFMPPGLQELIPFVKPAPIDQEPSKKQKKQHEGSKKKAKEVTLESQLQNMEVTEA</sequence>